<reference key="1">
    <citation type="journal article" date="2003" name="Nat. Biotechnol.">
        <title>The genome sequence of the entomopathogenic bacterium Photorhabdus luminescens.</title>
        <authorList>
            <person name="Duchaud E."/>
            <person name="Rusniok C."/>
            <person name="Frangeul L."/>
            <person name="Buchrieser C."/>
            <person name="Givaudan A."/>
            <person name="Taourit S."/>
            <person name="Bocs S."/>
            <person name="Boursaux-Eude C."/>
            <person name="Chandler M."/>
            <person name="Charles J.-F."/>
            <person name="Dassa E."/>
            <person name="Derose R."/>
            <person name="Derzelle S."/>
            <person name="Freyssinet G."/>
            <person name="Gaudriault S."/>
            <person name="Medigue C."/>
            <person name="Lanois A."/>
            <person name="Powell K."/>
            <person name="Siguier P."/>
            <person name="Vincent R."/>
            <person name="Wingate V."/>
            <person name="Zouine M."/>
            <person name="Glaser P."/>
            <person name="Boemare N."/>
            <person name="Danchin A."/>
            <person name="Kunst F."/>
        </authorList>
    </citation>
    <scope>NUCLEOTIDE SEQUENCE [LARGE SCALE GENOMIC DNA]</scope>
    <source>
        <strain>DSM 15139 / CIP 105565 / TT01</strain>
    </source>
</reference>
<feature type="chain" id="PRO_0000303473" description="tRNA N6-adenosine threonylcarbamoyltransferase">
    <location>
        <begin position="1"/>
        <end position="337"/>
    </location>
</feature>
<feature type="binding site" evidence="1">
    <location>
        <position position="111"/>
    </location>
    <ligand>
        <name>Fe cation</name>
        <dbReference type="ChEBI" id="CHEBI:24875"/>
    </ligand>
</feature>
<feature type="binding site" evidence="1">
    <location>
        <position position="115"/>
    </location>
    <ligand>
        <name>Fe cation</name>
        <dbReference type="ChEBI" id="CHEBI:24875"/>
    </ligand>
</feature>
<feature type="binding site" evidence="1">
    <location>
        <begin position="134"/>
        <end position="138"/>
    </location>
    <ligand>
        <name>substrate</name>
    </ligand>
</feature>
<feature type="binding site" evidence="1">
    <location>
        <position position="167"/>
    </location>
    <ligand>
        <name>substrate</name>
    </ligand>
</feature>
<feature type="binding site" evidence="1">
    <location>
        <position position="180"/>
    </location>
    <ligand>
        <name>substrate</name>
    </ligand>
</feature>
<feature type="binding site" evidence="1">
    <location>
        <position position="272"/>
    </location>
    <ligand>
        <name>substrate</name>
    </ligand>
</feature>
<feature type="binding site" evidence="1">
    <location>
        <position position="300"/>
    </location>
    <ligand>
        <name>Fe cation</name>
        <dbReference type="ChEBI" id="CHEBI:24875"/>
    </ligand>
</feature>
<proteinExistence type="inferred from homology"/>
<sequence length="337" mass="36093">MRVLGIETSCDETGIAIYDDEAGLLANQLYSQIKLHADYGGVVPELASRDHIRKTVPLIQAALKEAGLTCKDIDAVAYTAGPGLVGALLVGATIGRSLAFAWDVPAIPVHHMEGHLLAPMLEDNSPEFPFVALLVSGGHTQLISVTGIGKYELLGESIDDAAGEAFDKTAKLLGLDYPGGPVLSRMAQKGEVGRFVFPRPMTDRPGLDFSFSGLKTFASNTIHNNSDDEQTRADIARAFEDAVVDTLAIKCKRALEQTGFKRLVMAGGVSANRALRIKMEEVMAKLGGEVFYARPEFCTDNGAMIALAGMIRLKGEVNDSLGVIVKARWPLSELPPL</sequence>
<protein>
    <recommendedName>
        <fullName evidence="1">tRNA N6-adenosine threonylcarbamoyltransferase</fullName>
        <ecNumber evidence="1">2.3.1.234</ecNumber>
    </recommendedName>
    <alternativeName>
        <fullName evidence="1">N6-L-threonylcarbamoyladenine synthase</fullName>
        <shortName evidence="1">t(6)A synthase</shortName>
    </alternativeName>
    <alternativeName>
        <fullName evidence="1">t(6)A37 threonylcarbamoyladenosine biosynthesis protein TsaD</fullName>
    </alternativeName>
    <alternativeName>
        <fullName evidence="1">tRNA threonylcarbamoyladenosine biosynthesis protein TsaD</fullName>
    </alternativeName>
</protein>
<name>TSAD_PHOLL</name>
<comment type="function">
    <text evidence="1">Required for the formation of a threonylcarbamoyl group on adenosine at position 37 (t(6)A37) in tRNAs that read codons beginning with adenine. Is involved in the transfer of the threonylcarbamoyl moiety of threonylcarbamoyl-AMP (TC-AMP) to the N6 group of A37, together with TsaE and TsaB. TsaD likely plays a direct catalytic role in this reaction.</text>
</comment>
<comment type="catalytic activity">
    <reaction evidence="1">
        <text>L-threonylcarbamoyladenylate + adenosine(37) in tRNA = N(6)-L-threonylcarbamoyladenosine(37) in tRNA + AMP + H(+)</text>
        <dbReference type="Rhea" id="RHEA:37059"/>
        <dbReference type="Rhea" id="RHEA-COMP:10162"/>
        <dbReference type="Rhea" id="RHEA-COMP:10163"/>
        <dbReference type="ChEBI" id="CHEBI:15378"/>
        <dbReference type="ChEBI" id="CHEBI:73682"/>
        <dbReference type="ChEBI" id="CHEBI:74411"/>
        <dbReference type="ChEBI" id="CHEBI:74418"/>
        <dbReference type="ChEBI" id="CHEBI:456215"/>
        <dbReference type="EC" id="2.3.1.234"/>
    </reaction>
</comment>
<comment type="cofactor">
    <cofactor evidence="1">
        <name>Fe(2+)</name>
        <dbReference type="ChEBI" id="CHEBI:29033"/>
    </cofactor>
    <text evidence="1">Binds 1 Fe(2+) ion per subunit.</text>
</comment>
<comment type="subcellular location">
    <subcellularLocation>
        <location evidence="1">Cytoplasm</location>
    </subcellularLocation>
</comment>
<comment type="similarity">
    <text evidence="1">Belongs to the KAE1 / TsaD family.</text>
</comment>
<dbReference type="EC" id="2.3.1.234" evidence="1"/>
<dbReference type="EMBL" id="BX571872">
    <property type="protein sequence ID" value="CAE16348.1"/>
    <property type="molecule type" value="Genomic_DNA"/>
</dbReference>
<dbReference type="RefSeq" id="WP_011148109.1">
    <property type="nucleotide sequence ID" value="NC_005126.1"/>
</dbReference>
<dbReference type="SMR" id="Q7N0B6"/>
<dbReference type="STRING" id="243265.plu3976"/>
<dbReference type="GeneID" id="48850202"/>
<dbReference type="KEGG" id="plu:plu3976"/>
<dbReference type="eggNOG" id="COG0533">
    <property type="taxonomic scope" value="Bacteria"/>
</dbReference>
<dbReference type="HOGENOM" id="CLU_023208_0_0_6"/>
<dbReference type="OrthoDB" id="9806197at2"/>
<dbReference type="Proteomes" id="UP000002514">
    <property type="component" value="Chromosome"/>
</dbReference>
<dbReference type="GO" id="GO:0005737">
    <property type="term" value="C:cytoplasm"/>
    <property type="evidence" value="ECO:0007669"/>
    <property type="project" value="UniProtKB-SubCell"/>
</dbReference>
<dbReference type="GO" id="GO:0005506">
    <property type="term" value="F:iron ion binding"/>
    <property type="evidence" value="ECO:0007669"/>
    <property type="project" value="UniProtKB-UniRule"/>
</dbReference>
<dbReference type="GO" id="GO:0061711">
    <property type="term" value="F:N(6)-L-threonylcarbamoyladenine synthase activity"/>
    <property type="evidence" value="ECO:0007669"/>
    <property type="project" value="UniProtKB-EC"/>
</dbReference>
<dbReference type="GO" id="GO:0002949">
    <property type="term" value="P:tRNA threonylcarbamoyladenosine modification"/>
    <property type="evidence" value="ECO:0007669"/>
    <property type="project" value="UniProtKB-UniRule"/>
</dbReference>
<dbReference type="CDD" id="cd24133">
    <property type="entry name" value="ASKHA_NBD_TsaD_bac"/>
    <property type="match status" value="1"/>
</dbReference>
<dbReference type="FunFam" id="3.30.420.40:FF:000031">
    <property type="entry name" value="tRNA N6-adenosine threonylcarbamoyltransferase"/>
    <property type="match status" value="1"/>
</dbReference>
<dbReference type="Gene3D" id="3.30.420.40">
    <property type="match status" value="2"/>
</dbReference>
<dbReference type="HAMAP" id="MF_01445">
    <property type="entry name" value="TsaD"/>
    <property type="match status" value="1"/>
</dbReference>
<dbReference type="InterPro" id="IPR043129">
    <property type="entry name" value="ATPase_NBD"/>
</dbReference>
<dbReference type="InterPro" id="IPR000905">
    <property type="entry name" value="Gcp-like_dom"/>
</dbReference>
<dbReference type="InterPro" id="IPR017861">
    <property type="entry name" value="KAE1/TsaD"/>
</dbReference>
<dbReference type="InterPro" id="IPR017860">
    <property type="entry name" value="Peptidase_M22_CS"/>
</dbReference>
<dbReference type="InterPro" id="IPR022450">
    <property type="entry name" value="TsaD"/>
</dbReference>
<dbReference type="NCBIfam" id="TIGR00329">
    <property type="entry name" value="gcp_kae1"/>
    <property type="match status" value="1"/>
</dbReference>
<dbReference type="NCBIfam" id="TIGR03723">
    <property type="entry name" value="T6A_TsaD_YgjD"/>
    <property type="match status" value="1"/>
</dbReference>
<dbReference type="PANTHER" id="PTHR11735">
    <property type="entry name" value="TRNA N6-ADENOSINE THREONYLCARBAMOYLTRANSFERASE"/>
    <property type="match status" value="1"/>
</dbReference>
<dbReference type="PANTHER" id="PTHR11735:SF6">
    <property type="entry name" value="TRNA N6-ADENOSINE THREONYLCARBAMOYLTRANSFERASE, MITOCHONDRIAL"/>
    <property type="match status" value="1"/>
</dbReference>
<dbReference type="Pfam" id="PF00814">
    <property type="entry name" value="TsaD"/>
    <property type="match status" value="1"/>
</dbReference>
<dbReference type="PRINTS" id="PR00789">
    <property type="entry name" value="OSIALOPTASE"/>
</dbReference>
<dbReference type="SUPFAM" id="SSF53067">
    <property type="entry name" value="Actin-like ATPase domain"/>
    <property type="match status" value="2"/>
</dbReference>
<dbReference type="PROSITE" id="PS01016">
    <property type="entry name" value="GLYCOPROTEASE"/>
    <property type="match status" value="1"/>
</dbReference>
<organism>
    <name type="scientific">Photorhabdus laumondii subsp. laumondii (strain DSM 15139 / CIP 105565 / TT01)</name>
    <name type="common">Photorhabdus luminescens subsp. laumondii</name>
    <dbReference type="NCBI Taxonomy" id="243265"/>
    <lineage>
        <taxon>Bacteria</taxon>
        <taxon>Pseudomonadati</taxon>
        <taxon>Pseudomonadota</taxon>
        <taxon>Gammaproteobacteria</taxon>
        <taxon>Enterobacterales</taxon>
        <taxon>Morganellaceae</taxon>
        <taxon>Photorhabdus</taxon>
    </lineage>
</organism>
<keyword id="KW-0012">Acyltransferase</keyword>
<keyword id="KW-0963">Cytoplasm</keyword>
<keyword id="KW-0408">Iron</keyword>
<keyword id="KW-0479">Metal-binding</keyword>
<keyword id="KW-1185">Reference proteome</keyword>
<keyword id="KW-0808">Transferase</keyword>
<keyword id="KW-0819">tRNA processing</keyword>
<gene>
    <name evidence="1" type="primary">tsaD</name>
    <name type="synonym">gcp</name>
    <name type="ordered locus">plu3976</name>
</gene>
<evidence type="ECO:0000255" key="1">
    <source>
        <dbReference type="HAMAP-Rule" id="MF_01445"/>
    </source>
</evidence>
<accession>Q7N0B6</accession>